<organism>
    <name type="scientific">Streptococcus equi subsp. equi (strain 4047)</name>
    <dbReference type="NCBI Taxonomy" id="553482"/>
    <lineage>
        <taxon>Bacteria</taxon>
        <taxon>Bacillati</taxon>
        <taxon>Bacillota</taxon>
        <taxon>Bacilli</taxon>
        <taxon>Lactobacillales</taxon>
        <taxon>Streptococcaceae</taxon>
        <taxon>Streptococcus</taxon>
    </lineage>
</organism>
<reference key="1">
    <citation type="journal article" date="2009" name="PLoS Pathog.">
        <title>Genomic evidence for the evolution of Streptococcus equi: host restriction, increased virulence, and genetic exchange with human pathogens.</title>
        <authorList>
            <person name="Holden M.T.G."/>
            <person name="Heather Z."/>
            <person name="Paillot R."/>
            <person name="Steward K.F."/>
            <person name="Webb K."/>
            <person name="Ainslie F."/>
            <person name="Jourdan T."/>
            <person name="Bason N.C."/>
            <person name="Holroyd N.E."/>
            <person name="Mungall K."/>
            <person name="Quail M.A."/>
            <person name="Sanders M."/>
            <person name="Simmonds M."/>
            <person name="Willey D."/>
            <person name="Brooks K."/>
            <person name="Aanensen D.M."/>
            <person name="Spratt B.G."/>
            <person name="Jolley K.A."/>
            <person name="Maiden M.C.J."/>
            <person name="Kehoe M."/>
            <person name="Chanter N."/>
            <person name="Bentley S.D."/>
            <person name="Robinson C."/>
            <person name="Maskell D.J."/>
            <person name="Parkhill J."/>
            <person name="Waller A.S."/>
        </authorList>
    </citation>
    <scope>NUCLEOTIDE SEQUENCE [LARGE SCALE GENOMIC DNA]</scope>
    <source>
        <strain>4047</strain>
    </source>
</reference>
<comment type="function">
    <text evidence="1">Catalyzes the condensation reaction of fatty acid synthesis by the addition to an acyl acceptor of two carbons from malonyl-ACP. Catalyzes the first condensation reaction which initiates fatty acid synthesis and may therefore play a role in governing the total rate of fatty acid production. Possesses both acetoacetyl-ACP synthase and acetyl transacylase activities. Its substrate specificity determines the biosynthesis of branched-chain and/or straight-chain of fatty acids.</text>
</comment>
<comment type="catalytic activity">
    <reaction evidence="1">
        <text>malonyl-[ACP] + acetyl-CoA + H(+) = 3-oxobutanoyl-[ACP] + CO2 + CoA</text>
        <dbReference type="Rhea" id="RHEA:12080"/>
        <dbReference type="Rhea" id="RHEA-COMP:9623"/>
        <dbReference type="Rhea" id="RHEA-COMP:9625"/>
        <dbReference type="ChEBI" id="CHEBI:15378"/>
        <dbReference type="ChEBI" id="CHEBI:16526"/>
        <dbReference type="ChEBI" id="CHEBI:57287"/>
        <dbReference type="ChEBI" id="CHEBI:57288"/>
        <dbReference type="ChEBI" id="CHEBI:78449"/>
        <dbReference type="ChEBI" id="CHEBI:78450"/>
        <dbReference type="EC" id="2.3.1.180"/>
    </reaction>
</comment>
<comment type="pathway">
    <text evidence="1">Lipid metabolism; fatty acid biosynthesis.</text>
</comment>
<comment type="subunit">
    <text evidence="1">Homodimer.</text>
</comment>
<comment type="subcellular location">
    <subcellularLocation>
        <location evidence="1">Cytoplasm</location>
    </subcellularLocation>
</comment>
<comment type="domain">
    <text evidence="1">The last Arg residue of the ACP-binding site is essential for the weak association between ACP/AcpP and FabH.</text>
</comment>
<comment type="similarity">
    <text evidence="1">Belongs to the thiolase-like superfamily. FabH family.</text>
</comment>
<keyword id="KW-0012">Acyltransferase</keyword>
<keyword id="KW-0963">Cytoplasm</keyword>
<keyword id="KW-0275">Fatty acid biosynthesis</keyword>
<keyword id="KW-0276">Fatty acid metabolism</keyword>
<keyword id="KW-0444">Lipid biosynthesis</keyword>
<keyword id="KW-0443">Lipid metabolism</keyword>
<keyword id="KW-0511">Multifunctional enzyme</keyword>
<keyword id="KW-0808">Transferase</keyword>
<feature type="chain" id="PRO_1000187896" description="Beta-ketoacyl-[acyl-carrier-protein] synthase III">
    <location>
        <begin position="1"/>
        <end position="324"/>
    </location>
</feature>
<feature type="region of interest" description="ACP-binding" evidence="1">
    <location>
        <begin position="250"/>
        <end position="254"/>
    </location>
</feature>
<feature type="active site" evidence="1">
    <location>
        <position position="112"/>
    </location>
</feature>
<feature type="active site" evidence="1">
    <location>
        <position position="249"/>
    </location>
</feature>
<feature type="active site" evidence="1">
    <location>
        <position position="279"/>
    </location>
</feature>
<sequence length="324" mass="34805">MVFSKISQVAHYTPKQVISNDDLSQIMDTSHEWISSRTGIEKRHISTVEMTSDLAIRVAEQLLAGSGYDATALDFIIVATISPDASMPSTAAKVQAAIGATNAFAFDMTAACSGFVFALAMADKLIASGAYQRGLVIGAETLSKIIDWQDRSTAVLFGDGAGGVLLEASEQQHFLAEALHTDGAQGQSLTSGQSSLRSPFSQGQEVNSFLQMDGRAIFDFAIRDVSRSITAIIEQSGLAKEELDYLLLHQANRRILDKMAKKIGMPREKFLENMMHYGNTSAASIPILLSESVQNGQLKLDGSQHILLSGFGGGLTWGSLIVKI</sequence>
<protein>
    <recommendedName>
        <fullName evidence="1">Beta-ketoacyl-[acyl-carrier-protein] synthase III</fullName>
        <shortName evidence="1">Beta-ketoacyl-ACP synthase III</shortName>
        <shortName evidence="1">KAS III</shortName>
        <ecNumber evidence="1">2.3.1.180</ecNumber>
    </recommendedName>
    <alternativeName>
        <fullName evidence="1">3-oxoacyl-[acyl-carrier-protein] synthase 3</fullName>
    </alternativeName>
    <alternativeName>
        <fullName evidence="1">3-oxoacyl-[acyl-carrier-protein] synthase III</fullName>
    </alternativeName>
</protein>
<gene>
    <name evidence="1" type="primary">fabH</name>
    <name type="ordered locus">SEQ_0478</name>
</gene>
<name>FABH_STRE4</name>
<dbReference type="EC" id="2.3.1.180" evidence="1"/>
<dbReference type="EMBL" id="FM204883">
    <property type="protein sequence ID" value="CAW92682.1"/>
    <property type="molecule type" value="Genomic_DNA"/>
</dbReference>
<dbReference type="RefSeq" id="WP_012679078.1">
    <property type="nucleotide sequence ID" value="NC_012471.1"/>
</dbReference>
<dbReference type="SMR" id="C0M7U3"/>
<dbReference type="KEGG" id="seu:SEQ_0478"/>
<dbReference type="HOGENOM" id="CLU_039592_4_1_9"/>
<dbReference type="OrthoDB" id="9815506at2"/>
<dbReference type="UniPathway" id="UPA00094"/>
<dbReference type="Proteomes" id="UP000001365">
    <property type="component" value="Chromosome"/>
</dbReference>
<dbReference type="GO" id="GO:0005737">
    <property type="term" value="C:cytoplasm"/>
    <property type="evidence" value="ECO:0007669"/>
    <property type="project" value="UniProtKB-SubCell"/>
</dbReference>
<dbReference type="GO" id="GO:0004315">
    <property type="term" value="F:3-oxoacyl-[acyl-carrier-protein] synthase activity"/>
    <property type="evidence" value="ECO:0007669"/>
    <property type="project" value="InterPro"/>
</dbReference>
<dbReference type="GO" id="GO:0033818">
    <property type="term" value="F:beta-ketoacyl-acyl-carrier-protein synthase III activity"/>
    <property type="evidence" value="ECO:0007669"/>
    <property type="project" value="UniProtKB-UniRule"/>
</dbReference>
<dbReference type="GO" id="GO:0006633">
    <property type="term" value="P:fatty acid biosynthetic process"/>
    <property type="evidence" value="ECO:0007669"/>
    <property type="project" value="UniProtKB-UniRule"/>
</dbReference>
<dbReference type="CDD" id="cd00830">
    <property type="entry name" value="KAS_III"/>
    <property type="match status" value="1"/>
</dbReference>
<dbReference type="FunFam" id="3.40.47.10:FF:000004">
    <property type="entry name" value="3-oxoacyl-[acyl-carrier-protein] synthase 3"/>
    <property type="match status" value="1"/>
</dbReference>
<dbReference type="Gene3D" id="3.40.47.10">
    <property type="match status" value="1"/>
</dbReference>
<dbReference type="HAMAP" id="MF_01815">
    <property type="entry name" value="FabH"/>
    <property type="match status" value="1"/>
</dbReference>
<dbReference type="InterPro" id="IPR013747">
    <property type="entry name" value="ACP_syn_III_C"/>
</dbReference>
<dbReference type="InterPro" id="IPR013751">
    <property type="entry name" value="ACP_syn_III_N"/>
</dbReference>
<dbReference type="InterPro" id="IPR004655">
    <property type="entry name" value="FabH"/>
</dbReference>
<dbReference type="InterPro" id="IPR016039">
    <property type="entry name" value="Thiolase-like"/>
</dbReference>
<dbReference type="NCBIfam" id="TIGR00747">
    <property type="entry name" value="fabH"/>
    <property type="match status" value="1"/>
</dbReference>
<dbReference type="NCBIfam" id="NF006829">
    <property type="entry name" value="PRK09352.1"/>
    <property type="match status" value="1"/>
</dbReference>
<dbReference type="PANTHER" id="PTHR43091">
    <property type="entry name" value="3-OXOACYL-[ACYL-CARRIER-PROTEIN] SYNTHASE"/>
    <property type="match status" value="1"/>
</dbReference>
<dbReference type="PANTHER" id="PTHR43091:SF1">
    <property type="entry name" value="BETA-KETOACYL-[ACYL-CARRIER-PROTEIN] SYNTHASE III, CHLOROPLASTIC"/>
    <property type="match status" value="1"/>
</dbReference>
<dbReference type="Pfam" id="PF08545">
    <property type="entry name" value="ACP_syn_III"/>
    <property type="match status" value="1"/>
</dbReference>
<dbReference type="Pfam" id="PF08541">
    <property type="entry name" value="ACP_syn_III_C"/>
    <property type="match status" value="1"/>
</dbReference>
<dbReference type="SUPFAM" id="SSF53901">
    <property type="entry name" value="Thiolase-like"/>
    <property type="match status" value="1"/>
</dbReference>
<accession>C0M7U3</accession>
<proteinExistence type="inferred from homology"/>
<evidence type="ECO:0000255" key="1">
    <source>
        <dbReference type="HAMAP-Rule" id="MF_01815"/>
    </source>
</evidence>